<organism>
    <name type="scientific">Streptococcus pneumoniae serotype 2 (strain D39 / NCTC 7466)</name>
    <dbReference type="NCBI Taxonomy" id="373153"/>
    <lineage>
        <taxon>Bacteria</taxon>
        <taxon>Bacillati</taxon>
        <taxon>Bacillota</taxon>
        <taxon>Bacilli</taxon>
        <taxon>Lactobacillales</taxon>
        <taxon>Streptococcaceae</taxon>
        <taxon>Streptococcus</taxon>
    </lineage>
</organism>
<feature type="chain" id="PRO_1000050773" description="Large ribosomal subunit protein bL35">
    <location>
        <begin position="1"/>
        <end position="66"/>
    </location>
</feature>
<feature type="region of interest" description="Disordered" evidence="2">
    <location>
        <begin position="1"/>
        <end position="21"/>
    </location>
</feature>
<feature type="compositionally biased region" description="Basic residues" evidence="2">
    <location>
        <begin position="1"/>
        <end position="16"/>
    </location>
</feature>
<comment type="similarity">
    <text evidence="1">Belongs to the bacterial ribosomal protein bL35 family.</text>
</comment>
<proteinExistence type="inferred from homology"/>
<protein>
    <recommendedName>
        <fullName evidence="1">Large ribosomal subunit protein bL35</fullName>
    </recommendedName>
    <alternativeName>
        <fullName evidence="3">50S ribosomal protein L35</fullName>
    </alternativeName>
</protein>
<accession>Q04KW8</accession>
<sequence length="66" mass="7836">MPKQKTHRASAKRFKRTGSGGLKRFRAYTSHRFHGKTKKQRRHLRKASMVHSGDYKRIKAMLTRLK</sequence>
<reference key="1">
    <citation type="journal article" date="2007" name="J. Bacteriol.">
        <title>Genome sequence of Avery's virulent serotype 2 strain D39 of Streptococcus pneumoniae and comparison with that of unencapsulated laboratory strain R6.</title>
        <authorList>
            <person name="Lanie J.A."/>
            <person name="Ng W.-L."/>
            <person name="Kazmierczak K.M."/>
            <person name="Andrzejewski T.M."/>
            <person name="Davidsen T.M."/>
            <person name="Wayne K.J."/>
            <person name="Tettelin H."/>
            <person name="Glass J.I."/>
            <person name="Winkler M.E."/>
        </authorList>
    </citation>
    <scope>NUCLEOTIDE SEQUENCE [LARGE SCALE GENOMIC DNA]</scope>
    <source>
        <strain>D39 / NCTC 7466</strain>
    </source>
</reference>
<keyword id="KW-1185">Reference proteome</keyword>
<keyword id="KW-0687">Ribonucleoprotein</keyword>
<keyword id="KW-0689">Ribosomal protein</keyword>
<dbReference type="EMBL" id="CP000410">
    <property type="protein sequence ID" value="ABJ54754.1"/>
    <property type="molecule type" value="Genomic_DNA"/>
</dbReference>
<dbReference type="RefSeq" id="WP_001125943.1">
    <property type="nucleotide sequence ID" value="NZ_JAMLJR010000004.1"/>
</dbReference>
<dbReference type="SMR" id="Q04KW8"/>
<dbReference type="PaxDb" id="373153-SPD_0848"/>
<dbReference type="GeneID" id="93739777"/>
<dbReference type="KEGG" id="spd:SPD_0848"/>
<dbReference type="eggNOG" id="COG0291">
    <property type="taxonomic scope" value="Bacteria"/>
</dbReference>
<dbReference type="HOGENOM" id="CLU_169643_3_0_9"/>
<dbReference type="BioCyc" id="SPNE373153:G1G6V-931-MONOMER"/>
<dbReference type="Proteomes" id="UP000001452">
    <property type="component" value="Chromosome"/>
</dbReference>
<dbReference type="GO" id="GO:0022625">
    <property type="term" value="C:cytosolic large ribosomal subunit"/>
    <property type="evidence" value="ECO:0007669"/>
    <property type="project" value="TreeGrafter"/>
</dbReference>
<dbReference type="GO" id="GO:0003735">
    <property type="term" value="F:structural constituent of ribosome"/>
    <property type="evidence" value="ECO:0007669"/>
    <property type="project" value="InterPro"/>
</dbReference>
<dbReference type="GO" id="GO:0006412">
    <property type="term" value="P:translation"/>
    <property type="evidence" value="ECO:0007669"/>
    <property type="project" value="UniProtKB-UniRule"/>
</dbReference>
<dbReference type="FunFam" id="4.10.410.60:FF:000001">
    <property type="entry name" value="50S ribosomal protein L35"/>
    <property type="match status" value="1"/>
</dbReference>
<dbReference type="Gene3D" id="4.10.410.60">
    <property type="match status" value="1"/>
</dbReference>
<dbReference type="HAMAP" id="MF_00514">
    <property type="entry name" value="Ribosomal_bL35"/>
    <property type="match status" value="1"/>
</dbReference>
<dbReference type="InterPro" id="IPR001706">
    <property type="entry name" value="Ribosomal_bL35"/>
</dbReference>
<dbReference type="InterPro" id="IPR021137">
    <property type="entry name" value="Ribosomal_bL35-like"/>
</dbReference>
<dbReference type="InterPro" id="IPR018265">
    <property type="entry name" value="Ribosomal_bL35_CS"/>
</dbReference>
<dbReference type="InterPro" id="IPR037229">
    <property type="entry name" value="Ribosomal_bL35_sf"/>
</dbReference>
<dbReference type="NCBIfam" id="TIGR00001">
    <property type="entry name" value="rpmI_bact"/>
    <property type="match status" value="1"/>
</dbReference>
<dbReference type="PANTHER" id="PTHR33343">
    <property type="entry name" value="54S RIBOSOMAL PROTEIN BL35M"/>
    <property type="match status" value="1"/>
</dbReference>
<dbReference type="PANTHER" id="PTHR33343:SF1">
    <property type="entry name" value="LARGE RIBOSOMAL SUBUNIT PROTEIN BL35M"/>
    <property type="match status" value="1"/>
</dbReference>
<dbReference type="Pfam" id="PF01632">
    <property type="entry name" value="Ribosomal_L35p"/>
    <property type="match status" value="1"/>
</dbReference>
<dbReference type="PRINTS" id="PR00064">
    <property type="entry name" value="RIBOSOMALL35"/>
</dbReference>
<dbReference type="SUPFAM" id="SSF143034">
    <property type="entry name" value="L35p-like"/>
    <property type="match status" value="1"/>
</dbReference>
<dbReference type="PROSITE" id="PS00936">
    <property type="entry name" value="RIBOSOMAL_L35"/>
    <property type="match status" value="1"/>
</dbReference>
<gene>
    <name evidence="1" type="primary">rpmI</name>
    <name type="ordered locus">SPD_0848</name>
</gene>
<name>RL35_STRP2</name>
<evidence type="ECO:0000255" key="1">
    <source>
        <dbReference type="HAMAP-Rule" id="MF_00514"/>
    </source>
</evidence>
<evidence type="ECO:0000256" key="2">
    <source>
        <dbReference type="SAM" id="MobiDB-lite"/>
    </source>
</evidence>
<evidence type="ECO:0000305" key="3"/>